<proteinExistence type="inferred from homology"/>
<feature type="chain" id="PRO_0000329515" description="Polyribonucleotide nucleotidyltransferase">
    <location>
        <begin position="1"/>
        <end position="710"/>
    </location>
</feature>
<feature type="domain" description="KH" evidence="1">
    <location>
        <begin position="554"/>
        <end position="613"/>
    </location>
</feature>
<feature type="domain" description="S1 motif" evidence="1">
    <location>
        <begin position="623"/>
        <end position="691"/>
    </location>
</feature>
<feature type="binding site" evidence="1">
    <location>
        <position position="487"/>
    </location>
    <ligand>
        <name>Mg(2+)</name>
        <dbReference type="ChEBI" id="CHEBI:18420"/>
    </ligand>
</feature>
<feature type="binding site" evidence="1">
    <location>
        <position position="493"/>
    </location>
    <ligand>
        <name>Mg(2+)</name>
        <dbReference type="ChEBI" id="CHEBI:18420"/>
    </ligand>
</feature>
<sequence length="710" mass="78219">MSQEKQVFSIDLAGRQLTIETGQLAKQANGAVLVRYGDTAVLSTATASKEAKDVDFFPLTVNYEERLYAVGKIPGGFIKREGRPSEKAILASRLIDRPIRPLFADGFRNEVQVVSIVMSVDQDCSSEMAAMLGSSLALSISDIPFEGPIAGATVGRIDGEFIINPTVEQQEKSDIHLVVAGTKDAINMVEAGADQVPEETMLEAIMFGHEEIKRLIAFQEEIVQAVGKEKMEVKLYEVDAELEKAVREMAEKDMHTAIQVHEKHAREDAINEVKQRVIAHYEEQEVEAEVLGQVSEILYKIVKEEVRRLITVEKIRPDGRKSDEIRPLASEVGILPRTHGSGLFTRGQTQALSICTLGALGDVQILDGLGVEESKRFMHHYNFPSFSVGETRPMRGPGRREIGHGALGERALEPVIPSEKDFPYTVRLVSEVLESNGSTSQASICGSTLAMMDAGVPLKAPVAGIAMGLVKSGEHYTILTDIQGMEDHLGDMDFKVAGTAKGVTALQMDIKIDGLSREILEEALQQAKVGRMHILDHMLSVIAEPRKELSEYAPKIITMTINPDKIRDVIGPSGKQINKIIEETGVKIDIEQDGTVFISSIDQQMNEKAKKIIEDIVREVQVGEIYLGKVKRIEKFGAFVELFSGKDGLVHISELALERVGKVEDVVKIGDEISVKVIEIDKQGRVNLSRKVLLKEEQEKEVAKEEATQE</sequence>
<accession>A7GRD7</accession>
<name>PNP_BACCN</name>
<organism>
    <name type="scientific">Bacillus cytotoxicus (strain DSM 22905 / CIP 110041 / 391-98 / NVH 391-98)</name>
    <dbReference type="NCBI Taxonomy" id="315749"/>
    <lineage>
        <taxon>Bacteria</taxon>
        <taxon>Bacillati</taxon>
        <taxon>Bacillota</taxon>
        <taxon>Bacilli</taxon>
        <taxon>Bacillales</taxon>
        <taxon>Bacillaceae</taxon>
        <taxon>Bacillus</taxon>
        <taxon>Bacillus cereus group</taxon>
    </lineage>
</organism>
<dbReference type="EC" id="2.7.7.8" evidence="1"/>
<dbReference type="EMBL" id="CP000764">
    <property type="protein sequence ID" value="ABS22695.1"/>
    <property type="molecule type" value="Genomic_DNA"/>
</dbReference>
<dbReference type="RefSeq" id="WP_012094900.1">
    <property type="nucleotide sequence ID" value="NC_009674.1"/>
</dbReference>
<dbReference type="SMR" id="A7GRD7"/>
<dbReference type="STRING" id="315749.Bcer98_2459"/>
<dbReference type="GeneID" id="33897714"/>
<dbReference type="KEGG" id="bcy:Bcer98_2459"/>
<dbReference type="eggNOG" id="COG1185">
    <property type="taxonomic scope" value="Bacteria"/>
</dbReference>
<dbReference type="HOGENOM" id="CLU_004217_2_2_9"/>
<dbReference type="OrthoDB" id="9804305at2"/>
<dbReference type="Proteomes" id="UP000002300">
    <property type="component" value="Chromosome"/>
</dbReference>
<dbReference type="GO" id="GO:0005829">
    <property type="term" value="C:cytosol"/>
    <property type="evidence" value="ECO:0007669"/>
    <property type="project" value="TreeGrafter"/>
</dbReference>
<dbReference type="GO" id="GO:0000175">
    <property type="term" value="F:3'-5'-RNA exonuclease activity"/>
    <property type="evidence" value="ECO:0007669"/>
    <property type="project" value="TreeGrafter"/>
</dbReference>
<dbReference type="GO" id="GO:0000287">
    <property type="term" value="F:magnesium ion binding"/>
    <property type="evidence" value="ECO:0007669"/>
    <property type="project" value="UniProtKB-UniRule"/>
</dbReference>
<dbReference type="GO" id="GO:0004654">
    <property type="term" value="F:polyribonucleotide nucleotidyltransferase activity"/>
    <property type="evidence" value="ECO:0007669"/>
    <property type="project" value="UniProtKB-UniRule"/>
</dbReference>
<dbReference type="GO" id="GO:0003723">
    <property type="term" value="F:RNA binding"/>
    <property type="evidence" value="ECO:0007669"/>
    <property type="project" value="UniProtKB-UniRule"/>
</dbReference>
<dbReference type="GO" id="GO:0006402">
    <property type="term" value="P:mRNA catabolic process"/>
    <property type="evidence" value="ECO:0007669"/>
    <property type="project" value="UniProtKB-UniRule"/>
</dbReference>
<dbReference type="GO" id="GO:0006396">
    <property type="term" value="P:RNA processing"/>
    <property type="evidence" value="ECO:0007669"/>
    <property type="project" value="InterPro"/>
</dbReference>
<dbReference type="CDD" id="cd02393">
    <property type="entry name" value="KH-I_PNPase"/>
    <property type="match status" value="1"/>
</dbReference>
<dbReference type="CDD" id="cd11363">
    <property type="entry name" value="RNase_PH_PNPase_1"/>
    <property type="match status" value="1"/>
</dbReference>
<dbReference type="CDD" id="cd11364">
    <property type="entry name" value="RNase_PH_PNPase_2"/>
    <property type="match status" value="1"/>
</dbReference>
<dbReference type="CDD" id="cd04472">
    <property type="entry name" value="S1_PNPase"/>
    <property type="match status" value="1"/>
</dbReference>
<dbReference type="FunFam" id="2.40.50.140:FF:000023">
    <property type="entry name" value="Polyribonucleotide nucleotidyltransferase"/>
    <property type="match status" value="1"/>
</dbReference>
<dbReference type="FunFam" id="3.30.1370.10:FF:000001">
    <property type="entry name" value="Polyribonucleotide nucleotidyltransferase"/>
    <property type="match status" value="1"/>
</dbReference>
<dbReference type="FunFam" id="3.30.230.70:FF:000001">
    <property type="entry name" value="Polyribonucleotide nucleotidyltransferase"/>
    <property type="match status" value="1"/>
</dbReference>
<dbReference type="FunFam" id="3.30.230.70:FF:000002">
    <property type="entry name" value="Polyribonucleotide nucleotidyltransferase"/>
    <property type="match status" value="1"/>
</dbReference>
<dbReference type="Gene3D" id="3.30.230.70">
    <property type="entry name" value="GHMP Kinase, N-terminal domain"/>
    <property type="match status" value="2"/>
</dbReference>
<dbReference type="Gene3D" id="3.30.1370.10">
    <property type="entry name" value="K Homology domain, type 1"/>
    <property type="match status" value="1"/>
</dbReference>
<dbReference type="Gene3D" id="2.40.50.140">
    <property type="entry name" value="Nucleic acid-binding proteins"/>
    <property type="match status" value="1"/>
</dbReference>
<dbReference type="HAMAP" id="MF_01595">
    <property type="entry name" value="PNPase"/>
    <property type="match status" value="1"/>
</dbReference>
<dbReference type="InterPro" id="IPR001247">
    <property type="entry name" value="ExoRNase_PH_dom1"/>
</dbReference>
<dbReference type="InterPro" id="IPR015847">
    <property type="entry name" value="ExoRNase_PH_dom2"/>
</dbReference>
<dbReference type="InterPro" id="IPR036345">
    <property type="entry name" value="ExoRNase_PH_dom2_sf"/>
</dbReference>
<dbReference type="InterPro" id="IPR004087">
    <property type="entry name" value="KH_dom"/>
</dbReference>
<dbReference type="InterPro" id="IPR004088">
    <property type="entry name" value="KH_dom_type_1"/>
</dbReference>
<dbReference type="InterPro" id="IPR036612">
    <property type="entry name" value="KH_dom_type_1_sf"/>
</dbReference>
<dbReference type="InterPro" id="IPR012340">
    <property type="entry name" value="NA-bd_OB-fold"/>
</dbReference>
<dbReference type="InterPro" id="IPR012162">
    <property type="entry name" value="PNPase"/>
</dbReference>
<dbReference type="InterPro" id="IPR027408">
    <property type="entry name" value="PNPase/RNase_PH_dom_sf"/>
</dbReference>
<dbReference type="InterPro" id="IPR015848">
    <property type="entry name" value="PNPase_PH_RNA-bd_bac/org-type"/>
</dbReference>
<dbReference type="InterPro" id="IPR020568">
    <property type="entry name" value="Ribosomal_Su5_D2-typ_SF"/>
</dbReference>
<dbReference type="InterPro" id="IPR003029">
    <property type="entry name" value="S1_domain"/>
</dbReference>
<dbReference type="NCBIfam" id="TIGR03591">
    <property type="entry name" value="polynuc_phos"/>
    <property type="match status" value="1"/>
</dbReference>
<dbReference type="NCBIfam" id="NF008805">
    <property type="entry name" value="PRK11824.1"/>
    <property type="match status" value="1"/>
</dbReference>
<dbReference type="PANTHER" id="PTHR11252">
    <property type="entry name" value="POLYRIBONUCLEOTIDE NUCLEOTIDYLTRANSFERASE"/>
    <property type="match status" value="1"/>
</dbReference>
<dbReference type="PANTHER" id="PTHR11252:SF0">
    <property type="entry name" value="POLYRIBONUCLEOTIDE NUCLEOTIDYLTRANSFERASE 1, MITOCHONDRIAL"/>
    <property type="match status" value="1"/>
</dbReference>
<dbReference type="Pfam" id="PF00013">
    <property type="entry name" value="KH_1"/>
    <property type="match status" value="1"/>
</dbReference>
<dbReference type="Pfam" id="PF03726">
    <property type="entry name" value="PNPase"/>
    <property type="match status" value="1"/>
</dbReference>
<dbReference type="Pfam" id="PF01138">
    <property type="entry name" value="RNase_PH"/>
    <property type="match status" value="2"/>
</dbReference>
<dbReference type="Pfam" id="PF03725">
    <property type="entry name" value="RNase_PH_C"/>
    <property type="match status" value="2"/>
</dbReference>
<dbReference type="Pfam" id="PF00575">
    <property type="entry name" value="S1"/>
    <property type="match status" value="1"/>
</dbReference>
<dbReference type="PIRSF" id="PIRSF005499">
    <property type="entry name" value="PNPase"/>
    <property type="match status" value="1"/>
</dbReference>
<dbReference type="SMART" id="SM00322">
    <property type="entry name" value="KH"/>
    <property type="match status" value="1"/>
</dbReference>
<dbReference type="SMART" id="SM00316">
    <property type="entry name" value="S1"/>
    <property type="match status" value="1"/>
</dbReference>
<dbReference type="SUPFAM" id="SSF54791">
    <property type="entry name" value="Eukaryotic type KH-domain (KH-domain type I)"/>
    <property type="match status" value="1"/>
</dbReference>
<dbReference type="SUPFAM" id="SSF50249">
    <property type="entry name" value="Nucleic acid-binding proteins"/>
    <property type="match status" value="1"/>
</dbReference>
<dbReference type="SUPFAM" id="SSF55666">
    <property type="entry name" value="Ribonuclease PH domain 2-like"/>
    <property type="match status" value="2"/>
</dbReference>
<dbReference type="SUPFAM" id="SSF54211">
    <property type="entry name" value="Ribosomal protein S5 domain 2-like"/>
    <property type="match status" value="2"/>
</dbReference>
<dbReference type="PROSITE" id="PS50084">
    <property type="entry name" value="KH_TYPE_1"/>
    <property type="match status" value="1"/>
</dbReference>
<dbReference type="PROSITE" id="PS50126">
    <property type="entry name" value="S1"/>
    <property type="match status" value="1"/>
</dbReference>
<keyword id="KW-0963">Cytoplasm</keyword>
<keyword id="KW-0460">Magnesium</keyword>
<keyword id="KW-0479">Metal-binding</keyword>
<keyword id="KW-0548">Nucleotidyltransferase</keyword>
<keyword id="KW-0694">RNA-binding</keyword>
<keyword id="KW-0808">Transferase</keyword>
<protein>
    <recommendedName>
        <fullName evidence="1">Polyribonucleotide nucleotidyltransferase</fullName>
        <ecNumber evidence="1">2.7.7.8</ecNumber>
    </recommendedName>
    <alternativeName>
        <fullName evidence="1">Polynucleotide phosphorylase</fullName>
        <shortName evidence="1">PNPase</shortName>
    </alternativeName>
</protein>
<gene>
    <name evidence="1" type="primary">pnp</name>
    <name type="ordered locus">Bcer98_2459</name>
</gene>
<evidence type="ECO:0000255" key="1">
    <source>
        <dbReference type="HAMAP-Rule" id="MF_01595"/>
    </source>
</evidence>
<reference key="1">
    <citation type="journal article" date="2008" name="Chem. Biol. Interact.">
        <title>Extending the Bacillus cereus group genomics to putative food-borne pathogens of different toxicity.</title>
        <authorList>
            <person name="Lapidus A."/>
            <person name="Goltsman E."/>
            <person name="Auger S."/>
            <person name="Galleron N."/>
            <person name="Segurens B."/>
            <person name="Dossat C."/>
            <person name="Land M.L."/>
            <person name="Broussolle V."/>
            <person name="Brillard J."/>
            <person name="Guinebretiere M.-H."/>
            <person name="Sanchis V."/>
            <person name="Nguen-the C."/>
            <person name="Lereclus D."/>
            <person name="Richardson P."/>
            <person name="Wincker P."/>
            <person name="Weissenbach J."/>
            <person name="Ehrlich S.D."/>
            <person name="Sorokin A."/>
        </authorList>
    </citation>
    <scope>NUCLEOTIDE SEQUENCE [LARGE SCALE GENOMIC DNA]</scope>
    <source>
        <strain>DSM 22905 / CIP 110041 / 391-98 / NVH 391-98</strain>
    </source>
</reference>
<comment type="function">
    <text evidence="1">Involved in mRNA degradation. Catalyzes the phosphorolysis of single-stranded polyribonucleotides processively in the 3'- to 5'-direction.</text>
</comment>
<comment type="catalytic activity">
    <reaction evidence="1">
        <text>RNA(n+1) + phosphate = RNA(n) + a ribonucleoside 5'-diphosphate</text>
        <dbReference type="Rhea" id="RHEA:22096"/>
        <dbReference type="Rhea" id="RHEA-COMP:14527"/>
        <dbReference type="Rhea" id="RHEA-COMP:17342"/>
        <dbReference type="ChEBI" id="CHEBI:43474"/>
        <dbReference type="ChEBI" id="CHEBI:57930"/>
        <dbReference type="ChEBI" id="CHEBI:140395"/>
        <dbReference type="EC" id="2.7.7.8"/>
    </reaction>
</comment>
<comment type="cofactor">
    <cofactor evidence="1">
        <name>Mg(2+)</name>
        <dbReference type="ChEBI" id="CHEBI:18420"/>
    </cofactor>
</comment>
<comment type="subcellular location">
    <subcellularLocation>
        <location evidence="1">Cytoplasm</location>
    </subcellularLocation>
</comment>
<comment type="similarity">
    <text evidence="1">Belongs to the polyribonucleotide nucleotidyltransferase family.</text>
</comment>